<keyword id="KW-0238">DNA-binding</keyword>
<keyword id="KW-0539">Nucleus</keyword>
<keyword id="KW-1267">Proteomics identification</keyword>
<keyword id="KW-1185">Reference proteome</keyword>
<keyword id="KW-0804">Transcription</keyword>
<keyword id="KW-0805">Transcription regulation</keyword>
<organism>
    <name type="scientific">Homo sapiens</name>
    <name type="common">Human</name>
    <dbReference type="NCBI Taxonomy" id="9606"/>
    <lineage>
        <taxon>Eukaryota</taxon>
        <taxon>Metazoa</taxon>
        <taxon>Chordata</taxon>
        <taxon>Craniata</taxon>
        <taxon>Vertebrata</taxon>
        <taxon>Euteleostomi</taxon>
        <taxon>Mammalia</taxon>
        <taxon>Eutheria</taxon>
        <taxon>Euarchontoglires</taxon>
        <taxon>Primates</taxon>
        <taxon>Haplorrhini</taxon>
        <taxon>Catarrhini</taxon>
        <taxon>Hominidae</taxon>
        <taxon>Homo</taxon>
    </lineage>
</organism>
<feature type="chain" id="PRO_0000091803" description="Forkhead box protein B1">
    <location>
        <begin position="1"/>
        <end position="325"/>
    </location>
</feature>
<feature type="DNA-binding region" description="Fork-head" evidence="2">
    <location>
        <begin position="12"/>
        <end position="103"/>
    </location>
</feature>
<feature type="region of interest" description="Disordered" evidence="3">
    <location>
        <begin position="284"/>
        <end position="325"/>
    </location>
</feature>
<feature type="compositionally biased region" description="Low complexity" evidence="3">
    <location>
        <begin position="284"/>
        <end position="309"/>
    </location>
</feature>
<feature type="sequence conflict" description="In Ref. 2; AAC09344." evidence="4" ref="2">
    <original>L</original>
    <variation>F</variation>
    <location>
        <position position="65"/>
    </location>
</feature>
<feature type="sequence conflict" description="In Ref. 1; AAC62493 and 6; AAB47564." evidence="4" ref="1 6">
    <original>R</original>
    <variation>C</variation>
    <location>
        <position position="106"/>
    </location>
</feature>
<feature type="sequence conflict" description="In Ref. 1; AAC62493, 2; AAC09344 and 6; AAB47564." evidence="4" ref="1 2 6">
    <location>
        <position position="126"/>
    </location>
</feature>
<feature type="sequence conflict" description="In Ref. 6; AAB47564." evidence="4" ref="6">
    <original>AIE</original>
    <variation>SIN</variation>
    <location>
        <begin position="171"/>
        <end position="173"/>
    </location>
</feature>
<gene>
    <name type="primary">FOXB1</name>
    <name type="synonym">FKH5</name>
</gene>
<accession>Q99853</accession>
<accession>O60652</accession>
<accession>O75917</accession>
<accession>Q14CL2</accession>
<protein>
    <recommendedName>
        <fullName>Forkhead box protein B1</fullName>
    </recommendedName>
    <alternativeName>
        <fullName>Transcription factor FKH-5</fullName>
    </alternativeName>
</protein>
<comment type="function">
    <text evidence="1">Transcription factor expressed by neural progenitor cells in specific regions of the embryonic neuroepithelium. Essential for the mammillary nuclei maintenance. Negatively regulates the proliferation of oligodendrocyte progenitors and promotes oligodendrocyte maturation. Also expressed in mammary glands, plays a role in lactation, controls development of mammary glands and the inferior colliculi of the midbrain in the central nervous system that regulates the milk-ejection reflex.</text>
</comment>
<comment type="interaction">
    <interactant intactId="EBI-3916225">
        <id>Q99853</id>
    </interactant>
    <interactant intactId="EBI-948001">
        <id>Q15323</id>
        <label>KRT31</label>
    </interactant>
    <organismsDiffer>false</organismsDiffer>
    <experiments>3</experiments>
</comment>
<comment type="interaction">
    <interactant intactId="EBI-3916225">
        <id>Q99853</id>
    </interactant>
    <interactant intactId="EBI-10171697">
        <id>Q6A162</id>
        <label>KRT40</label>
    </interactant>
    <organismsDiffer>false</organismsDiffer>
    <experiments>3</experiments>
</comment>
<comment type="interaction">
    <interactant intactId="EBI-3916225">
        <id>Q99853</id>
    </interactant>
    <interactant intactId="EBI-10171774">
        <id>P60410</id>
        <label>KRTAP10-8</label>
    </interactant>
    <organismsDiffer>false</organismsDiffer>
    <experiments>3</experiments>
</comment>
<comment type="interaction">
    <interactant intactId="EBI-3916225">
        <id>Q99853</id>
    </interactant>
    <interactant intactId="EBI-945833">
        <id>Q7Z3S9</id>
        <label>NOTCH2NLA</label>
    </interactant>
    <organismsDiffer>false</organismsDiffer>
    <experiments>3</experiments>
</comment>
<comment type="interaction">
    <interactant intactId="EBI-3916225">
        <id>Q99853</id>
    </interactant>
    <interactant intactId="EBI-719493">
        <id>P14373</id>
        <label>TRIM27</label>
    </interactant>
    <organismsDiffer>false</organismsDiffer>
    <experiments>3</experiments>
</comment>
<comment type="subcellular location">
    <subcellularLocation>
        <location evidence="1">Nucleus</location>
    </subcellularLocation>
</comment>
<evidence type="ECO:0000250" key="1">
    <source>
        <dbReference type="UniProtKB" id="Q64732"/>
    </source>
</evidence>
<evidence type="ECO:0000255" key="2">
    <source>
        <dbReference type="PROSITE-ProRule" id="PRU00089"/>
    </source>
</evidence>
<evidence type="ECO:0000256" key="3">
    <source>
        <dbReference type="SAM" id="MobiDB-lite"/>
    </source>
</evidence>
<evidence type="ECO:0000305" key="4"/>
<reference key="1">
    <citation type="submission" date="1998-06" db="EMBL/GenBank/DDBJ databases">
        <title>Molecular cloning of human Fkh5 from a SCLC line.</title>
        <authorList>
            <person name="Bingle C.D."/>
        </authorList>
    </citation>
    <scope>NUCLEOTIDE SEQUENCE [MRNA]</scope>
</reference>
<reference key="2">
    <citation type="submission" date="1998-03" db="EMBL/GenBank/DDBJ databases">
        <authorList>
            <person name="Cascio S.M."/>
            <person name="Dodd K.A."/>
            <person name="Hicks J."/>
            <person name="Chow S."/>
            <person name="Brown C."/>
        </authorList>
    </citation>
    <scope>NUCLEOTIDE SEQUENCE [GENOMIC DNA]</scope>
    <source>
        <tissue>Placenta</tissue>
    </source>
</reference>
<reference key="3">
    <citation type="journal article" date="2004" name="Nat. Genet.">
        <title>Complete sequencing and characterization of 21,243 full-length human cDNAs.</title>
        <authorList>
            <person name="Ota T."/>
            <person name="Suzuki Y."/>
            <person name="Nishikawa T."/>
            <person name="Otsuki T."/>
            <person name="Sugiyama T."/>
            <person name="Irie R."/>
            <person name="Wakamatsu A."/>
            <person name="Hayashi K."/>
            <person name="Sato H."/>
            <person name="Nagai K."/>
            <person name="Kimura K."/>
            <person name="Makita H."/>
            <person name="Sekine M."/>
            <person name="Obayashi M."/>
            <person name="Nishi T."/>
            <person name="Shibahara T."/>
            <person name="Tanaka T."/>
            <person name="Ishii S."/>
            <person name="Yamamoto J."/>
            <person name="Saito K."/>
            <person name="Kawai Y."/>
            <person name="Isono Y."/>
            <person name="Nakamura Y."/>
            <person name="Nagahari K."/>
            <person name="Murakami K."/>
            <person name="Yasuda T."/>
            <person name="Iwayanagi T."/>
            <person name="Wagatsuma M."/>
            <person name="Shiratori A."/>
            <person name="Sudo H."/>
            <person name="Hosoiri T."/>
            <person name="Kaku Y."/>
            <person name="Kodaira H."/>
            <person name="Kondo H."/>
            <person name="Sugawara M."/>
            <person name="Takahashi M."/>
            <person name="Kanda K."/>
            <person name="Yokoi T."/>
            <person name="Furuya T."/>
            <person name="Kikkawa E."/>
            <person name="Omura Y."/>
            <person name="Abe K."/>
            <person name="Kamihara K."/>
            <person name="Katsuta N."/>
            <person name="Sato K."/>
            <person name="Tanikawa M."/>
            <person name="Yamazaki M."/>
            <person name="Ninomiya K."/>
            <person name="Ishibashi T."/>
            <person name="Yamashita H."/>
            <person name="Murakawa K."/>
            <person name="Fujimori K."/>
            <person name="Tanai H."/>
            <person name="Kimata M."/>
            <person name="Watanabe M."/>
            <person name="Hiraoka S."/>
            <person name="Chiba Y."/>
            <person name="Ishida S."/>
            <person name="Ono Y."/>
            <person name="Takiguchi S."/>
            <person name="Watanabe S."/>
            <person name="Yosida M."/>
            <person name="Hotuta T."/>
            <person name="Kusano J."/>
            <person name="Kanehori K."/>
            <person name="Takahashi-Fujii A."/>
            <person name="Hara H."/>
            <person name="Tanase T.-O."/>
            <person name="Nomura Y."/>
            <person name="Togiya S."/>
            <person name="Komai F."/>
            <person name="Hara R."/>
            <person name="Takeuchi K."/>
            <person name="Arita M."/>
            <person name="Imose N."/>
            <person name="Musashino K."/>
            <person name="Yuuki H."/>
            <person name="Oshima A."/>
            <person name="Sasaki N."/>
            <person name="Aotsuka S."/>
            <person name="Yoshikawa Y."/>
            <person name="Matsunawa H."/>
            <person name="Ichihara T."/>
            <person name="Shiohata N."/>
            <person name="Sano S."/>
            <person name="Moriya S."/>
            <person name="Momiyama H."/>
            <person name="Satoh N."/>
            <person name="Takami S."/>
            <person name="Terashima Y."/>
            <person name="Suzuki O."/>
            <person name="Nakagawa S."/>
            <person name="Senoh A."/>
            <person name="Mizoguchi H."/>
            <person name="Goto Y."/>
            <person name="Shimizu F."/>
            <person name="Wakebe H."/>
            <person name="Hishigaki H."/>
            <person name="Watanabe T."/>
            <person name="Sugiyama A."/>
            <person name="Takemoto M."/>
            <person name="Kawakami B."/>
            <person name="Yamazaki M."/>
            <person name="Watanabe K."/>
            <person name="Kumagai A."/>
            <person name="Itakura S."/>
            <person name="Fukuzumi Y."/>
            <person name="Fujimori Y."/>
            <person name="Komiyama M."/>
            <person name="Tashiro H."/>
            <person name="Tanigami A."/>
            <person name="Fujiwara T."/>
            <person name="Ono T."/>
            <person name="Yamada K."/>
            <person name="Fujii Y."/>
            <person name="Ozaki K."/>
            <person name="Hirao M."/>
            <person name="Ohmori Y."/>
            <person name="Kawabata A."/>
            <person name="Hikiji T."/>
            <person name="Kobatake N."/>
            <person name="Inagaki H."/>
            <person name="Ikema Y."/>
            <person name="Okamoto S."/>
            <person name="Okitani R."/>
            <person name="Kawakami T."/>
            <person name="Noguchi S."/>
            <person name="Itoh T."/>
            <person name="Shigeta K."/>
            <person name="Senba T."/>
            <person name="Matsumura K."/>
            <person name="Nakajima Y."/>
            <person name="Mizuno T."/>
            <person name="Morinaga M."/>
            <person name="Sasaki M."/>
            <person name="Togashi T."/>
            <person name="Oyama M."/>
            <person name="Hata H."/>
            <person name="Watanabe M."/>
            <person name="Komatsu T."/>
            <person name="Mizushima-Sugano J."/>
            <person name="Satoh T."/>
            <person name="Shirai Y."/>
            <person name="Takahashi Y."/>
            <person name="Nakagawa K."/>
            <person name="Okumura K."/>
            <person name="Nagase T."/>
            <person name="Nomura N."/>
            <person name="Kikuchi H."/>
            <person name="Masuho Y."/>
            <person name="Yamashita R."/>
            <person name="Nakai K."/>
            <person name="Yada T."/>
            <person name="Nakamura Y."/>
            <person name="Ohara O."/>
            <person name="Isogai T."/>
            <person name="Sugano S."/>
        </authorList>
    </citation>
    <scope>NUCLEOTIDE SEQUENCE [LARGE SCALE MRNA]</scope>
</reference>
<reference key="4">
    <citation type="submission" date="2005-07" db="EMBL/GenBank/DDBJ databases">
        <authorList>
            <person name="Mural R.J."/>
            <person name="Istrail S."/>
            <person name="Sutton G.G."/>
            <person name="Florea L."/>
            <person name="Halpern A.L."/>
            <person name="Mobarry C.M."/>
            <person name="Lippert R."/>
            <person name="Walenz B."/>
            <person name="Shatkay H."/>
            <person name="Dew I."/>
            <person name="Miller J.R."/>
            <person name="Flanigan M.J."/>
            <person name="Edwards N.J."/>
            <person name="Bolanos R."/>
            <person name="Fasulo D."/>
            <person name="Halldorsson B.V."/>
            <person name="Hannenhalli S."/>
            <person name="Turner R."/>
            <person name="Yooseph S."/>
            <person name="Lu F."/>
            <person name="Nusskern D.R."/>
            <person name="Shue B.C."/>
            <person name="Zheng X.H."/>
            <person name="Zhong F."/>
            <person name="Delcher A.L."/>
            <person name="Huson D.H."/>
            <person name="Kravitz S.A."/>
            <person name="Mouchard L."/>
            <person name="Reinert K."/>
            <person name="Remington K.A."/>
            <person name="Clark A.G."/>
            <person name="Waterman M.S."/>
            <person name="Eichler E.E."/>
            <person name="Adams M.D."/>
            <person name="Hunkapiller M.W."/>
            <person name="Myers E.W."/>
            <person name="Venter J.C."/>
        </authorList>
    </citation>
    <scope>NUCLEOTIDE SEQUENCE [LARGE SCALE GENOMIC DNA]</scope>
</reference>
<reference key="5">
    <citation type="journal article" date="2004" name="Genome Res.">
        <title>The status, quality, and expansion of the NIH full-length cDNA project: the Mammalian Gene Collection (MGC).</title>
        <authorList>
            <consortium name="The MGC Project Team"/>
        </authorList>
    </citation>
    <scope>NUCLEOTIDE SEQUENCE [LARGE SCALE MRNA]</scope>
</reference>
<reference key="6">
    <citation type="submission" date="1997-01" db="EMBL/GenBank/DDBJ databases">
        <title>HNF-3/forkhead gene expression in human pulmonary cell lines: molecular cloning of a novel human HNF-3/forkhead cDNA.</title>
        <authorList>
            <person name="Bingle C.D."/>
            <person name="Gowan S."/>
        </authorList>
    </citation>
    <scope>NUCLEOTIDE SEQUENCE [MRNA] OF 8-173</scope>
    <source>
        <tissue>Lung</tissue>
    </source>
</reference>
<name>FOXB1_HUMAN</name>
<proteinExistence type="evidence at protein level"/>
<dbReference type="EMBL" id="AF071554">
    <property type="protein sequence ID" value="AAC62493.1"/>
    <property type="molecule type" value="mRNA"/>
</dbReference>
<dbReference type="EMBL" id="AF055080">
    <property type="protein sequence ID" value="AAC09344.1"/>
    <property type="molecule type" value="Genomic_DNA"/>
</dbReference>
<dbReference type="EMBL" id="AK290944">
    <property type="protein sequence ID" value="BAF83633.1"/>
    <property type="molecule type" value="mRNA"/>
</dbReference>
<dbReference type="EMBL" id="CH471082">
    <property type="protein sequence ID" value="EAW77581.1"/>
    <property type="molecule type" value="Genomic_DNA"/>
</dbReference>
<dbReference type="EMBL" id="BC113710">
    <property type="protein sequence ID" value="AAI13711.1"/>
    <property type="molecule type" value="mRNA"/>
</dbReference>
<dbReference type="EMBL" id="U87393">
    <property type="protein sequence ID" value="AAB47564.1"/>
    <property type="molecule type" value="mRNA"/>
</dbReference>
<dbReference type="CCDS" id="CCDS32255.1"/>
<dbReference type="RefSeq" id="NP_036314.2">
    <property type="nucleotide sequence ID" value="NM_012182.3"/>
</dbReference>
<dbReference type="SMR" id="Q99853"/>
<dbReference type="BioGRID" id="117960">
    <property type="interactions" value="133"/>
</dbReference>
<dbReference type="FunCoup" id="Q99853">
    <property type="interactions" value="737"/>
</dbReference>
<dbReference type="IntAct" id="Q99853">
    <property type="interactions" value="128"/>
</dbReference>
<dbReference type="MINT" id="Q99853"/>
<dbReference type="STRING" id="9606.ENSP00000379369"/>
<dbReference type="GlyGen" id="Q99853">
    <property type="glycosylation" value="2 sites"/>
</dbReference>
<dbReference type="iPTMnet" id="Q99853"/>
<dbReference type="PhosphoSitePlus" id="Q99853"/>
<dbReference type="BioMuta" id="FOXB1"/>
<dbReference type="DMDM" id="215274160"/>
<dbReference type="MassIVE" id="Q99853"/>
<dbReference type="PaxDb" id="9606-ENSP00000379369"/>
<dbReference type="PeptideAtlas" id="Q99853"/>
<dbReference type="ProteomicsDB" id="78505"/>
<dbReference type="Antibodypedia" id="12956">
    <property type="antibodies" value="154 antibodies from 32 providers"/>
</dbReference>
<dbReference type="DNASU" id="27023"/>
<dbReference type="Ensembl" id="ENST00000396057.6">
    <property type="protein sequence ID" value="ENSP00000379369.4"/>
    <property type="gene ID" value="ENSG00000171956.7"/>
</dbReference>
<dbReference type="GeneID" id="27023"/>
<dbReference type="KEGG" id="hsa:27023"/>
<dbReference type="MANE-Select" id="ENST00000396057.6">
    <property type="protein sequence ID" value="ENSP00000379369.4"/>
    <property type="RefSeq nucleotide sequence ID" value="NM_012182.3"/>
    <property type="RefSeq protein sequence ID" value="NP_036314.2"/>
</dbReference>
<dbReference type="UCSC" id="uc002agj.2">
    <property type="organism name" value="human"/>
</dbReference>
<dbReference type="AGR" id="HGNC:3799"/>
<dbReference type="CTD" id="27023"/>
<dbReference type="DisGeNET" id="27023"/>
<dbReference type="GeneCards" id="FOXB1"/>
<dbReference type="HGNC" id="HGNC:3799">
    <property type="gene designation" value="FOXB1"/>
</dbReference>
<dbReference type="HPA" id="ENSG00000171956">
    <property type="expression patterns" value="Tissue enriched (brain)"/>
</dbReference>
<dbReference type="MIM" id="619961">
    <property type="type" value="gene"/>
</dbReference>
<dbReference type="neXtProt" id="NX_Q99853"/>
<dbReference type="OpenTargets" id="ENSG00000171956"/>
<dbReference type="PharmGKB" id="PA28216"/>
<dbReference type="VEuPathDB" id="HostDB:ENSG00000171956"/>
<dbReference type="eggNOG" id="KOG3562">
    <property type="taxonomic scope" value="Eukaryota"/>
</dbReference>
<dbReference type="GeneTree" id="ENSGT00940000160522"/>
<dbReference type="HOGENOM" id="CLU_040357_2_0_1"/>
<dbReference type="InParanoid" id="Q99853"/>
<dbReference type="OMA" id="MYSTSVI"/>
<dbReference type="OrthoDB" id="5954824at2759"/>
<dbReference type="PAN-GO" id="Q99853">
    <property type="GO annotations" value="5 GO annotations based on evolutionary models"/>
</dbReference>
<dbReference type="PhylomeDB" id="Q99853"/>
<dbReference type="TreeFam" id="TF350628"/>
<dbReference type="PathwayCommons" id="Q99853"/>
<dbReference type="SignaLink" id="Q99853"/>
<dbReference type="BioGRID-ORCS" id="27023">
    <property type="hits" value="10 hits in 1166 CRISPR screens"/>
</dbReference>
<dbReference type="ChiTaRS" id="FOXB1">
    <property type="organism name" value="human"/>
</dbReference>
<dbReference type="GenomeRNAi" id="27023"/>
<dbReference type="Pharos" id="Q99853">
    <property type="development level" value="Tbio"/>
</dbReference>
<dbReference type="PRO" id="PR:Q99853"/>
<dbReference type="Proteomes" id="UP000005640">
    <property type="component" value="Chromosome 15"/>
</dbReference>
<dbReference type="RNAct" id="Q99853">
    <property type="molecule type" value="protein"/>
</dbReference>
<dbReference type="Bgee" id="ENSG00000171956">
    <property type="expression patterns" value="Expressed in hypothalamus and 52 other cell types or tissues"/>
</dbReference>
<dbReference type="GO" id="GO:0000785">
    <property type="term" value="C:chromatin"/>
    <property type="evidence" value="ECO:0000247"/>
    <property type="project" value="NTNU_SB"/>
</dbReference>
<dbReference type="GO" id="GO:0005634">
    <property type="term" value="C:nucleus"/>
    <property type="evidence" value="ECO:0000250"/>
    <property type="project" value="UniProtKB"/>
</dbReference>
<dbReference type="GO" id="GO:0000981">
    <property type="term" value="F:DNA-binding transcription factor activity, RNA polymerase II-specific"/>
    <property type="evidence" value="ECO:0000247"/>
    <property type="project" value="NTNU_SB"/>
</dbReference>
<dbReference type="GO" id="GO:0000978">
    <property type="term" value="F:RNA polymerase II cis-regulatory region sequence-specific DNA binding"/>
    <property type="evidence" value="ECO:0000318"/>
    <property type="project" value="GO_Central"/>
</dbReference>
<dbReference type="GO" id="GO:0043565">
    <property type="term" value="F:sequence-specific DNA binding"/>
    <property type="evidence" value="ECO:0000250"/>
    <property type="project" value="UniProtKB"/>
</dbReference>
<dbReference type="GO" id="GO:1990837">
    <property type="term" value="F:sequence-specific double-stranded DNA binding"/>
    <property type="evidence" value="ECO:0000314"/>
    <property type="project" value="ARUK-UCL"/>
</dbReference>
<dbReference type="GO" id="GO:0009653">
    <property type="term" value="P:anatomical structure morphogenesis"/>
    <property type="evidence" value="ECO:0000318"/>
    <property type="project" value="GO_Central"/>
</dbReference>
<dbReference type="GO" id="GO:0007412">
    <property type="term" value="P:axon target recognition"/>
    <property type="evidence" value="ECO:0000250"/>
    <property type="project" value="UniProtKB"/>
</dbReference>
<dbReference type="GO" id="GO:0030154">
    <property type="term" value="P:cell differentiation"/>
    <property type="evidence" value="ECO:0000318"/>
    <property type="project" value="GO_Central"/>
</dbReference>
<dbReference type="GO" id="GO:0061381">
    <property type="term" value="P:cell migration in diencephalon"/>
    <property type="evidence" value="ECO:0000250"/>
    <property type="project" value="UniProtKB"/>
</dbReference>
<dbReference type="GO" id="GO:0061030">
    <property type="term" value="P:epithelial cell differentiation involved in mammary gland alveolus development"/>
    <property type="evidence" value="ECO:0000250"/>
    <property type="project" value="UniProtKB"/>
</dbReference>
<dbReference type="GO" id="GO:0033504">
    <property type="term" value="P:floor plate development"/>
    <property type="evidence" value="ECO:0000250"/>
    <property type="project" value="UniProtKB"/>
</dbReference>
<dbReference type="GO" id="GO:0021855">
    <property type="term" value="P:hypothalamus cell migration"/>
    <property type="evidence" value="ECO:0000250"/>
    <property type="project" value="UniProtKB"/>
</dbReference>
<dbReference type="GO" id="GO:0061379">
    <property type="term" value="P:inferior colliculus development"/>
    <property type="evidence" value="ECO:0000250"/>
    <property type="project" value="UniProtKB"/>
</dbReference>
<dbReference type="GO" id="GO:0007595">
    <property type="term" value="P:lactation"/>
    <property type="evidence" value="ECO:0000250"/>
    <property type="project" value="UniProtKB"/>
</dbReference>
<dbReference type="GO" id="GO:0061377">
    <property type="term" value="P:mammary gland lobule development"/>
    <property type="evidence" value="ECO:0000250"/>
    <property type="project" value="UniProtKB"/>
</dbReference>
<dbReference type="GO" id="GO:0021767">
    <property type="term" value="P:mammillary body development"/>
    <property type="evidence" value="ECO:0000250"/>
    <property type="project" value="UniProtKB"/>
</dbReference>
<dbReference type="GO" id="GO:0061374">
    <property type="term" value="P:mammillothalamic axonal tract development"/>
    <property type="evidence" value="ECO:0000250"/>
    <property type="project" value="UniProtKB"/>
</dbReference>
<dbReference type="GO" id="GO:0030901">
    <property type="term" value="P:midbrain development"/>
    <property type="evidence" value="ECO:0000250"/>
    <property type="project" value="UniProtKB"/>
</dbReference>
<dbReference type="GO" id="GO:0043524">
    <property type="term" value="P:negative regulation of neuron apoptotic process"/>
    <property type="evidence" value="ECO:0000250"/>
    <property type="project" value="UniProtKB"/>
</dbReference>
<dbReference type="GO" id="GO:0006357">
    <property type="term" value="P:regulation of transcription by RNA polymerase II"/>
    <property type="evidence" value="ECO:0000318"/>
    <property type="project" value="GO_Central"/>
</dbReference>
<dbReference type="GO" id="GO:0001756">
    <property type="term" value="P:somitogenesis"/>
    <property type="evidence" value="ECO:0000250"/>
    <property type="project" value="UniProtKB"/>
</dbReference>
<dbReference type="GO" id="GO:0021510">
    <property type="term" value="P:spinal cord development"/>
    <property type="evidence" value="ECO:0007669"/>
    <property type="project" value="Ensembl"/>
</dbReference>
<dbReference type="GO" id="GO:0022029">
    <property type="term" value="P:telencephalon cell migration"/>
    <property type="evidence" value="ECO:0000250"/>
    <property type="project" value="UniProtKB"/>
</dbReference>
<dbReference type="GO" id="GO:0021794">
    <property type="term" value="P:thalamus development"/>
    <property type="evidence" value="ECO:0007669"/>
    <property type="project" value="Ensembl"/>
</dbReference>
<dbReference type="GO" id="GO:0001655">
    <property type="term" value="P:urogenital system development"/>
    <property type="evidence" value="ECO:0007669"/>
    <property type="project" value="Ensembl"/>
</dbReference>
<dbReference type="GO" id="GO:0008542">
    <property type="term" value="P:visual learning"/>
    <property type="evidence" value="ECO:0000250"/>
    <property type="project" value="UniProtKB"/>
</dbReference>
<dbReference type="CDD" id="cd20043">
    <property type="entry name" value="FH_FOXB2"/>
    <property type="match status" value="1"/>
</dbReference>
<dbReference type="FunFam" id="1.10.10.10:FF:000082">
    <property type="entry name" value="forkhead box protein B2"/>
    <property type="match status" value="1"/>
</dbReference>
<dbReference type="Gene3D" id="1.10.10.10">
    <property type="entry name" value="Winged helix-like DNA-binding domain superfamily/Winged helix DNA-binding domain"/>
    <property type="match status" value="1"/>
</dbReference>
<dbReference type="InterPro" id="IPR001766">
    <property type="entry name" value="Fork_head_dom"/>
</dbReference>
<dbReference type="InterPro" id="IPR050211">
    <property type="entry name" value="FOX_domain-containing"/>
</dbReference>
<dbReference type="InterPro" id="IPR047389">
    <property type="entry name" value="FOXB1_B2_FH"/>
</dbReference>
<dbReference type="InterPro" id="IPR018122">
    <property type="entry name" value="TF_fork_head_CS_1"/>
</dbReference>
<dbReference type="InterPro" id="IPR030456">
    <property type="entry name" value="TF_fork_head_CS_2"/>
</dbReference>
<dbReference type="InterPro" id="IPR036388">
    <property type="entry name" value="WH-like_DNA-bd_sf"/>
</dbReference>
<dbReference type="InterPro" id="IPR036390">
    <property type="entry name" value="WH_DNA-bd_sf"/>
</dbReference>
<dbReference type="PANTHER" id="PTHR11829">
    <property type="entry name" value="FORKHEAD BOX PROTEIN"/>
    <property type="match status" value="1"/>
</dbReference>
<dbReference type="PANTHER" id="PTHR11829:SF209">
    <property type="entry name" value="FORKHEAD BOX PROTEIN B1"/>
    <property type="match status" value="1"/>
</dbReference>
<dbReference type="Pfam" id="PF00250">
    <property type="entry name" value="Forkhead"/>
    <property type="match status" value="1"/>
</dbReference>
<dbReference type="PRINTS" id="PR00053">
    <property type="entry name" value="FORKHEAD"/>
</dbReference>
<dbReference type="SMART" id="SM00339">
    <property type="entry name" value="FH"/>
    <property type="match status" value="1"/>
</dbReference>
<dbReference type="SUPFAM" id="SSF46785">
    <property type="entry name" value="Winged helix' DNA-binding domain"/>
    <property type="match status" value="1"/>
</dbReference>
<dbReference type="PROSITE" id="PS00657">
    <property type="entry name" value="FORK_HEAD_1"/>
    <property type="match status" value="1"/>
</dbReference>
<dbReference type="PROSITE" id="PS00658">
    <property type="entry name" value="FORK_HEAD_2"/>
    <property type="match status" value="1"/>
</dbReference>
<dbReference type="PROSITE" id="PS50039">
    <property type="entry name" value="FORK_HEAD_3"/>
    <property type="match status" value="1"/>
</dbReference>
<sequence>MPRPGRNTYSDQKPPYSYISLTAMAIQSSPEKMLPLSEIYKFIMDRFPYYRENTQRWQNSLRHNLSFNDCFIKIPRRPDQPGKGSFWALHPSCGDMFENGSFLRRRKRFKVLKSDHLAPSKPADAAQYLQQQAKLRLSALAASGTHLPQMPAAAYNLGGVAQPSGFKHPFAIENIIAREYKMPGGLAFSAMQPVPAAYPLPNQLTTMGSSLGTGWPHVYGSAGMIDSATPISMASGDYSAYGVPLKPLCHAAGQTLPAIPVPIKPTPAAVPALPALPAPIPTLLSNSPPSLSPTSSQTATSQSSPATPSETLTSPASALHSVAVH</sequence>